<dbReference type="EC" id="1.13.11.63" evidence="1"/>
<dbReference type="EMBL" id="AB062912">
    <property type="protein sequence ID" value="BAB60807.1"/>
    <property type="molecule type" value="mRNA"/>
</dbReference>
<dbReference type="SMR" id="Q91XT5"/>
<dbReference type="FunCoup" id="Q91XT5">
    <property type="interactions" value="201"/>
</dbReference>
<dbReference type="STRING" id="10116.ENSRNOP00000016880"/>
<dbReference type="GlyGen" id="Q91XT5">
    <property type="glycosylation" value="1 site"/>
</dbReference>
<dbReference type="PhosphoSitePlus" id="Q91XT5"/>
<dbReference type="PaxDb" id="10116-ENSRNOP00000016880"/>
<dbReference type="UCSC" id="RGD:70981">
    <property type="organism name" value="rat"/>
</dbReference>
<dbReference type="AGR" id="RGD:70981"/>
<dbReference type="RGD" id="70981">
    <property type="gene designation" value="Bco1"/>
</dbReference>
<dbReference type="eggNOG" id="KOG1285">
    <property type="taxonomic scope" value="Eukaryota"/>
</dbReference>
<dbReference type="InParanoid" id="Q91XT5"/>
<dbReference type="PhylomeDB" id="Q91XT5"/>
<dbReference type="BRENDA" id="1.13.11.63">
    <property type="organism ID" value="5301"/>
</dbReference>
<dbReference type="Reactome" id="R-RNO-975634">
    <property type="pathway name" value="Retinoid metabolism and transport"/>
</dbReference>
<dbReference type="UniPathway" id="UPA00912"/>
<dbReference type="PRO" id="PR:Q91XT5"/>
<dbReference type="Proteomes" id="UP000002494">
    <property type="component" value="Unplaced"/>
</dbReference>
<dbReference type="GO" id="GO:0005829">
    <property type="term" value="C:cytosol"/>
    <property type="evidence" value="ECO:0000250"/>
    <property type="project" value="UniProtKB"/>
</dbReference>
<dbReference type="GO" id="GO:0003834">
    <property type="term" value="F:beta-carotene 15,15'-dioxygenase activity"/>
    <property type="evidence" value="ECO:0000314"/>
    <property type="project" value="RGD"/>
</dbReference>
<dbReference type="GO" id="GO:0010436">
    <property type="term" value="F:carotenoid dioxygenase activity"/>
    <property type="evidence" value="ECO:0000318"/>
    <property type="project" value="GO_Central"/>
</dbReference>
<dbReference type="GO" id="GO:0046872">
    <property type="term" value="F:metal ion binding"/>
    <property type="evidence" value="ECO:0007669"/>
    <property type="project" value="UniProtKB-KW"/>
</dbReference>
<dbReference type="GO" id="GO:1901810">
    <property type="term" value="P:beta-carotene metabolic process"/>
    <property type="evidence" value="ECO:0000266"/>
    <property type="project" value="RGD"/>
</dbReference>
<dbReference type="GO" id="GO:0016121">
    <property type="term" value="P:carotene catabolic process"/>
    <property type="evidence" value="ECO:0000250"/>
    <property type="project" value="UniProtKB"/>
</dbReference>
<dbReference type="GO" id="GO:0042574">
    <property type="term" value="P:retinal metabolic process"/>
    <property type="evidence" value="ECO:0000250"/>
    <property type="project" value="UniProtKB"/>
</dbReference>
<dbReference type="GO" id="GO:0001523">
    <property type="term" value="P:retinoid metabolic process"/>
    <property type="evidence" value="ECO:0000314"/>
    <property type="project" value="UniProtKB"/>
</dbReference>
<dbReference type="GO" id="GO:0042572">
    <property type="term" value="P:retinol metabolic process"/>
    <property type="evidence" value="ECO:0007669"/>
    <property type="project" value="UniProtKB-UniPathway"/>
</dbReference>
<dbReference type="InterPro" id="IPR004294">
    <property type="entry name" value="Carotenoid_Oase"/>
</dbReference>
<dbReference type="PANTHER" id="PTHR10543:SF132">
    <property type="entry name" value="BETA,BETA-CAROTENE 15,15'-DIOXYGENASE"/>
    <property type="match status" value="1"/>
</dbReference>
<dbReference type="PANTHER" id="PTHR10543">
    <property type="entry name" value="BETA-CAROTENE DIOXYGENASE"/>
    <property type="match status" value="1"/>
</dbReference>
<dbReference type="Pfam" id="PF03055">
    <property type="entry name" value="RPE65"/>
    <property type="match status" value="1"/>
</dbReference>
<proteinExistence type="evidence at transcript level"/>
<name>BCDO1_RAT</name>
<keyword id="KW-0963">Cytoplasm</keyword>
<keyword id="KW-0223">Dioxygenase</keyword>
<keyword id="KW-0408">Iron</keyword>
<keyword id="KW-0443">Lipid metabolism</keyword>
<keyword id="KW-0479">Metal-binding</keyword>
<keyword id="KW-0560">Oxidoreductase</keyword>
<keyword id="KW-1185">Reference proteome</keyword>
<gene>
    <name evidence="6" type="primary">Bco1</name>
    <name type="synonym">Bcdo</name>
    <name type="synonym">Bcdo1</name>
    <name type="synonym">Bcmo1</name>
</gene>
<reference key="1">
    <citation type="submission" date="2001-06" db="EMBL/GenBank/DDBJ databases">
        <title>Regulation of beta-carotene 15,15'-dioxygenase in oxidative stress.</title>
        <authorList>
            <person name="Takitani K."/>
            <person name="Ban R."/>
            <person name="Tamai H."/>
        </authorList>
    </citation>
    <scope>NUCLEOTIDE SEQUENCE [MRNA]</scope>
    <source>
        <tissue>Intestine</tissue>
    </source>
</reference>
<feature type="chain" id="PRO_0000143935" description="Beta,beta-carotene 15,15'-dioxygenase">
    <location>
        <begin position="1"/>
        <end position="566"/>
    </location>
</feature>
<feature type="region of interest" description="Disordered" evidence="4">
    <location>
        <begin position="529"/>
        <end position="566"/>
    </location>
</feature>
<feature type="binding site" evidence="3">
    <location>
        <position position="172"/>
    </location>
    <ligand>
        <name>Fe cation</name>
        <dbReference type="ChEBI" id="CHEBI:24875"/>
        <note>catalytic</note>
    </ligand>
</feature>
<feature type="binding site" evidence="3">
    <location>
        <position position="237"/>
    </location>
    <ligand>
        <name>Fe cation</name>
        <dbReference type="ChEBI" id="CHEBI:24875"/>
        <note>catalytic</note>
    </ligand>
</feature>
<feature type="binding site" evidence="3">
    <location>
        <position position="308"/>
    </location>
    <ligand>
        <name>Fe cation</name>
        <dbReference type="ChEBI" id="CHEBI:24875"/>
        <note>catalytic</note>
    </ligand>
</feature>
<feature type="binding site" evidence="3">
    <location>
        <position position="514"/>
    </location>
    <ligand>
        <name>Fe cation</name>
        <dbReference type="ChEBI" id="CHEBI:24875"/>
        <note>catalytic</note>
    </ligand>
</feature>
<organism>
    <name type="scientific">Rattus norvegicus</name>
    <name type="common">Rat</name>
    <dbReference type="NCBI Taxonomy" id="10116"/>
    <lineage>
        <taxon>Eukaryota</taxon>
        <taxon>Metazoa</taxon>
        <taxon>Chordata</taxon>
        <taxon>Craniata</taxon>
        <taxon>Vertebrata</taxon>
        <taxon>Euteleostomi</taxon>
        <taxon>Mammalia</taxon>
        <taxon>Eutheria</taxon>
        <taxon>Euarchontoglires</taxon>
        <taxon>Glires</taxon>
        <taxon>Rodentia</taxon>
        <taxon>Myomorpha</taxon>
        <taxon>Muroidea</taxon>
        <taxon>Muridae</taxon>
        <taxon>Murinae</taxon>
        <taxon>Rattus</taxon>
    </lineage>
</organism>
<protein>
    <recommendedName>
        <fullName evidence="5">Beta,beta-carotene 15,15'-dioxygenase</fullName>
        <ecNumber evidence="1">1.13.11.63</ecNumber>
    </recommendedName>
    <alternativeName>
        <fullName>Beta-carotene dioxygenase 1</fullName>
    </alternativeName>
    <alternativeName>
        <fullName evidence="6">Beta-carotene oxygenase 1</fullName>
    </alternativeName>
</protein>
<evidence type="ECO:0000250" key="1">
    <source>
        <dbReference type="UniProtKB" id="Q9HAY6"/>
    </source>
</evidence>
<evidence type="ECO:0000250" key="2">
    <source>
        <dbReference type="UniProtKB" id="Q9I993"/>
    </source>
</evidence>
<evidence type="ECO:0000250" key="3">
    <source>
        <dbReference type="UniProtKB" id="Q9JJS6"/>
    </source>
</evidence>
<evidence type="ECO:0000256" key="4">
    <source>
        <dbReference type="SAM" id="MobiDB-lite"/>
    </source>
</evidence>
<evidence type="ECO:0000305" key="5"/>
<evidence type="ECO:0000312" key="6">
    <source>
        <dbReference type="RGD" id="70981"/>
    </source>
</evidence>
<accession>Q91XT5</accession>
<sequence>MEIIFGRNKKEQLEPLRATVTGSIPAWLQGTLLRNGPGMHTVGDSKYNHWFDGLALLHSFSIRDGEVFYRSKYLQSDTYNANIEANRIVVSEFGTMAYPDPCKNIFSKAFSYLSHTIPDFTDNCLINIMKCGEDFYATTETNYIRKIDPQTLETLEKVDYRKYVAVNLATSHPHYDEAGNVLNMGTSIADKGGTKYVMFKIPATAPGSKKKGKNPLKHSEVFCSIPSRSLLSPSYYHSFGVTENYVVFLEQPFKLDILKMATAYMRGVSWASCMTFCKEDKTYIHIIDQKTRKPVPTKFYTDPMVVFHHVNAYEEDGCVLFDVIAYEDNSLYQLFYLANLNKDFEEKSRLTSVPTLRRFAVPLHVDKDAEVGSNLVKVSSTTATALKEKDDHVYCQPEVLYEGLELPRINYAHNGKPYRYIFAAEVQWSPVPTKILKYDVLTKSSLKWSEESCWPAEPLFVPTPGAKDEDDGVILSAIISTDPQKLPFLLILDAKSFTELARASVDVDMHLDLHGLFIPDAGWNAVKQTPAKTQEDENSDHPTGLTAPGLGHGENDFTAGHGGKSL</sequence>
<comment type="function">
    <text evidence="1">Symmetrically cleaves beta-carotene into two molecules of retinal using a dioxygenase mechanism.</text>
</comment>
<comment type="catalytic activity">
    <reaction evidence="1">
        <text>all-trans-beta-carotene + O2 = 2 all-trans-retinal</text>
        <dbReference type="Rhea" id="RHEA:32887"/>
        <dbReference type="ChEBI" id="CHEBI:15379"/>
        <dbReference type="ChEBI" id="CHEBI:17579"/>
        <dbReference type="ChEBI" id="CHEBI:17898"/>
        <dbReference type="EC" id="1.13.11.63"/>
    </reaction>
    <physiologicalReaction direction="left-to-right" evidence="1">
        <dbReference type="Rhea" id="RHEA:32888"/>
    </physiologicalReaction>
</comment>
<comment type="cofactor">
    <cofactor evidence="3">
        <name>Fe(2+)</name>
        <dbReference type="ChEBI" id="CHEBI:29033"/>
    </cofactor>
    <text evidence="3">Binds 1 Fe(2+) ion per subunit.</text>
</comment>
<comment type="pathway">
    <text evidence="1">Cofactor metabolism; retinol metabolism.</text>
</comment>
<comment type="subcellular location">
    <subcellularLocation>
        <location evidence="2">Cytoplasm</location>
        <location evidence="2">Cytosol</location>
    </subcellularLocation>
</comment>
<comment type="similarity">
    <text evidence="5">Belongs to the carotenoid oxygenase family.</text>
</comment>